<accession>Q68WZ0</accession>
<dbReference type="EC" id="3.6.4.-" evidence="1"/>
<dbReference type="EMBL" id="AE017197">
    <property type="protein sequence ID" value="AAU03852.1"/>
    <property type="molecule type" value="Genomic_DNA"/>
</dbReference>
<dbReference type="RefSeq" id="WP_011190836.1">
    <property type="nucleotide sequence ID" value="NC_006142.1"/>
</dbReference>
<dbReference type="SMR" id="Q68WZ0"/>
<dbReference type="KEGG" id="rty:RT0375"/>
<dbReference type="eggNOG" id="COG2255">
    <property type="taxonomic scope" value="Bacteria"/>
</dbReference>
<dbReference type="HOGENOM" id="CLU_055599_1_0_5"/>
<dbReference type="OrthoDB" id="9804478at2"/>
<dbReference type="Proteomes" id="UP000000604">
    <property type="component" value="Chromosome"/>
</dbReference>
<dbReference type="GO" id="GO:0005737">
    <property type="term" value="C:cytoplasm"/>
    <property type="evidence" value="ECO:0007669"/>
    <property type="project" value="UniProtKB-SubCell"/>
</dbReference>
<dbReference type="GO" id="GO:0048476">
    <property type="term" value="C:Holliday junction resolvase complex"/>
    <property type="evidence" value="ECO:0007669"/>
    <property type="project" value="UniProtKB-UniRule"/>
</dbReference>
<dbReference type="GO" id="GO:0005524">
    <property type="term" value="F:ATP binding"/>
    <property type="evidence" value="ECO:0007669"/>
    <property type="project" value="UniProtKB-UniRule"/>
</dbReference>
<dbReference type="GO" id="GO:0016887">
    <property type="term" value="F:ATP hydrolysis activity"/>
    <property type="evidence" value="ECO:0007669"/>
    <property type="project" value="InterPro"/>
</dbReference>
<dbReference type="GO" id="GO:0000400">
    <property type="term" value="F:four-way junction DNA binding"/>
    <property type="evidence" value="ECO:0007669"/>
    <property type="project" value="UniProtKB-UniRule"/>
</dbReference>
<dbReference type="GO" id="GO:0009378">
    <property type="term" value="F:four-way junction helicase activity"/>
    <property type="evidence" value="ECO:0007669"/>
    <property type="project" value="InterPro"/>
</dbReference>
<dbReference type="GO" id="GO:0006310">
    <property type="term" value="P:DNA recombination"/>
    <property type="evidence" value="ECO:0007669"/>
    <property type="project" value="UniProtKB-UniRule"/>
</dbReference>
<dbReference type="GO" id="GO:0006281">
    <property type="term" value="P:DNA repair"/>
    <property type="evidence" value="ECO:0007669"/>
    <property type="project" value="UniProtKB-UniRule"/>
</dbReference>
<dbReference type="CDD" id="cd00009">
    <property type="entry name" value="AAA"/>
    <property type="match status" value="1"/>
</dbReference>
<dbReference type="Gene3D" id="1.10.8.60">
    <property type="match status" value="1"/>
</dbReference>
<dbReference type="Gene3D" id="3.40.50.300">
    <property type="entry name" value="P-loop containing nucleotide triphosphate hydrolases"/>
    <property type="match status" value="1"/>
</dbReference>
<dbReference type="Gene3D" id="1.10.10.10">
    <property type="entry name" value="Winged helix-like DNA-binding domain superfamily/Winged helix DNA-binding domain"/>
    <property type="match status" value="1"/>
</dbReference>
<dbReference type="HAMAP" id="MF_00016">
    <property type="entry name" value="DNA_HJ_migration_RuvB"/>
    <property type="match status" value="1"/>
</dbReference>
<dbReference type="InterPro" id="IPR003593">
    <property type="entry name" value="AAA+_ATPase"/>
</dbReference>
<dbReference type="InterPro" id="IPR041445">
    <property type="entry name" value="AAA_lid_4"/>
</dbReference>
<dbReference type="InterPro" id="IPR004605">
    <property type="entry name" value="DNA_helicase_Holl-junc_RuvB"/>
</dbReference>
<dbReference type="InterPro" id="IPR027417">
    <property type="entry name" value="P-loop_NTPase"/>
</dbReference>
<dbReference type="InterPro" id="IPR008824">
    <property type="entry name" value="RuvB-like_N"/>
</dbReference>
<dbReference type="InterPro" id="IPR008823">
    <property type="entry name" value="RuvB_C"/>
</dbReference>
<dbReference type="InterPro" id="IPR036388">
    <property type="entry name" value="WH-like_DNA-bd_sf"/>
</dbReference>
<dbReference type="InterPro" id="IPR036390">
    <property type="entry name" value="WH_DNA-bd_sf"/>
</dbReference>
<dbReference type="NCBIfam" id="NF000868">
    <property type="entry name" value="PRK00080.1"/>
    <property type="match status" value="1"/>
</dbReference>
<dbReference type="NCBIfam" id="TIGR00635">
    <property type="entry name" value="ruvB"/>
    <property type="match status" value="1"/>
</dbReference>
<dbReference type="PANTHER" id="PTHR42848">
    <property type="match status" value="1"/>
</dbReference>
<dbReference type="PANTHER" id="PTHR42848:SF1">
    <property type="entry name" value="HOLLIDAY JUNCTION BRANCH MIGRATION COMPLEX SUBUNIT RUVB"/>
    <property type="match status" value="1"/>
</dbReference>
<dbReference type="Pfam" id="PF17864">
    <property type="entry name" value="AAA_lid_4"/>
    <property type="match status" value="1"/>
</dbReference>
<dbReference type="Pfam" id="PF05491">
    <property type="entry name" value="RuvB_C"/>
    <property type="match status" value="1"/>
</dbReference>
<dbReference type="Pfam" id="PF05496">
    <property type="entry name" value="RuvB_N"/>
    <property type="match status" value="1"/>
</dbReference>
<dbReference type="SMART" id="SM00382">
    <property type="entry name" value="AAA"/>
    <property type="match status" value="1"/>
</dbReference>
<dbReference type="SUPFAM" id="SSF52540">
    <property type="entry name" value="P-loop containing nucleoside triphosphate hydrolases"/>
    <property type="match status" value="1"/>
</dbReference>
<dbReference type="SUPFAM" id="SSF46785">
    <property type="entry name" value="Winged helix' DNA-binding domain"/>
    <property type="match status" value="1"/>
</dbReference>
<name>RUVB_RICTY</name>
<evidence type="ECO:0000255" key="1">
    <source>
        <dbReference type="HAMAP-Rule" id="MF_00016"/>
    </source>
</evidence>
<feature type="chain" id="PRO_0000165589" description="Holliday junction branch migration complex subunit RuvB">
    <location>
        <begin position="1"/>
        <end position="342"/>
    </location>
</feature>
<feature type="region of interest" description="Large ATPase domain (RuvB-L)" evidence="1">
    <location>
        <begin position="1"/>
        <end position="179"/>
    </location>
</feature>
<feature type="region of interest" description="Small ATPAse domain (RuvB-S)" evidence="1">
    <location>
        <begin position="180"/>
        <end position="250"/>
    </location>
</feature>
<feature type="region of interest" description="Head domain (RuvB-H)" evidence="1">
    <location>
        <begin position="253"/>
        <end position="342"/>
    </location>
</feature>
<feature type="binding site" evidence="1">
    <location>
        <position position="18"/>
    </location>
    <ligand>
        <name>ATP</name>
        <dbReference type="ChEBI" id="CHEBI:30616"/>
    </ligand>
</feature>
<feature type="binding site" evidence="1">
    <location>
        <position position="19"/>
    </location>
    <ligand>
        <name>ATP</name>
        <dbReference type="ChEBI" id="CHEBI:30616"/>
    </ligand>
</feature>
<feature type="binding site" evidence="1">
    <location>
        <position position="60"/>
    </location>
    <ligand>
        <name>ATP</name>
        <dbReference type="ChEBI" id="CHEBI:30616"/>
    </ligand>
</feature>
<feature type="binding site" evidence="1">
    <location>
        <position position="63"/>
    </location>
    <ligand>
        <name>ATP</name>
        <dbReference type="ChEBI" id="CHEBI:30616"/>
    </ligand>
</feature>
<feature type="binding site" evidence="1">
    <location>
        <position position="64"/>
    </location>
    <ligand>
        <name>ATP</name>
        <dbReference type="ChEBI" id="CHEBI:30616"/>
    </ligand>
</feature>
<feature type="binding site" evidence="1">
    <location>
        <position position="64"/>
    </location>
    <ligand>
        <name>Mg(2+)</name>
        <dbReference type="ChEBI" id="CHEBI:18420"/>
    </ligand>
</feature>
<feature type="binding site" evidence="1">
    <location>
        <position position="65"/>
    </location>
    <ligand>
        <name>ATP</name>
        <dbReference type="ChEBI" id="CHEBI:30616"/>
    </ligand>
</feature>
<feature type="binding site" evidence="1">
    <location>
        <begin position="126"/>
        <end position="128"/>
    </location>
    <ligand>
        <name>ATP</name>
        <dbReference type="ChEBI" id="CHEBI:30616"/>
    </ligand>
</feature>
<feature type="binding site" evidence="1">
    <location>
        <position position="169"/>
    </location>
    <ligand>
        <name>ATP</name>
        <dbReference type="ChEBI" id="CHEBI:30616"/>
    </ligand>
</feature>
<feature type="binding site" evidence="1">
    <location>
        <position position="179"/>
    </location>
    <ligand>
        <name>ATP</name>
        <dbReference type="ChEBI" id="CHEBI:30616"/>
    </ligand>
</feature>
<feature type="binding site" evidence="1">
    <location>
        <position position="216"/>
    </location>
    <ligand>
        <name>ATP</name>
        <dbReference type="ChEBI" id="CHEBI:30616"/>
    </ligand>
</feature>
<feature type="binding site" evidence="1">
    <location>
        <position position="289"/>
    </location>
    <ligand>
        <name>DNA</name>
        <dbReference type="ChEBI" id="CHEBI:16991"/>
    </ligand>
</feature>
<feature type="binding site" evidence="1">
    <location>
        <position position="308"/>
    </location>
    <ligand>
        <name>DNA</name>
        <dbReference type="ChEBI" id="CHEBI:16991"/>
    </ligand>
</feature>
<feature type="binding site" evidence="1">
    <location>
        <position position="313"/>
    </location>
    <ligand>
        <name>DNA</name>
        <dbReference type="ChEBI" id="CHEBI:16991"/>
    </ligand>
</feature>
<organism>
    <name type="scientific">Rickettsia typhi (strain ATCC VR-144 / Wilmington)</name>
    <dbReference type="NCBI Taxonomy" id="257363"/>
    <lineage>
        <taxon>Bacteria</taxon>
        <taxon>Pseudomonadati</taxon>
        <taxon>Pseudomonadota</taxon>
        <taxon>Alphaproteobacteria</taxon>
        <taxon>Rickettsiales</taxon>
        <taxon>Rickettsiaceae</taxon>
        <taxon>Rickettsieae</taxon>
        <taxon>Rickettsia</taxon>
        <taxon>typhus group</taxon>
    </lineage>
</organism>
<sequence length="342" mass="38491">MTNILSPEKSENDQELPIRPSYLQEFVGQQQIKENLLVFIKAAKSRNEHLDHTLFYGPPGLGKTTLAKIISNEIGGNFKSTAGPAIIKAADLAAILTNLEKNDVLFIDEIHRLNTLVEEILYSAMEDFELDIIIGEGSAARSVKITLPKFTLIGATTRFGMLSNSLRDRFGIPMRLNFYNTEELKQVLNRASKLLDIDLTDSGSEEIAKRSRGTPRIALRLLRRIRDFAVVDGKLRIDKEICDFGLKRLTVDSIGLDSNDYRYLKFIADNYHGGPVGIETIAAALSEQRDELEETIEPYLIKIGLVKRTPRGRVITIAAFEHLKMPIPNKSQHQFNILNENE</sequence>
<reference key="1">
    <citation type="journal article" date="2004" name="J. Bacteriol.">
        <title>Complete genome sequence of Rickettsia typhi and comparison with sequences of other Rickettsiae.</title>
        <authorList>
            <person name="McLeod M.P."/>
            <person name="Qin X."/>
            <person name="Karpathy S.E."/>
            <person name="Gioia J."/>
            <person name="Highlander S.K."/>
            <person name="Fox G.E."/>
            <person name="McNeill T.Z."/>
            <person name="Jiang H."/>
            <person name="Muzny D."/>
            <person name="Jacob L.S."/>
            <person name="Hawes A.C."/>
            <person name="Sodergren E."/>
            <person name="Gill R."/>
            <person name="Hume J."/>
            <person name="Morgan M."/>
            <person name="Fan G."/>
            <person name="Amin A.G."/>
            <person name="Gibbs R.A."/>
            <person name="Hong C."/>
            <person name="Yu X.-J."/>
            <person name="Walker D.H."/>
            <person name="Weinstock G.M."/>
        </authorList>
    </citation>
    <scope>NUCLEOTIDE SEQUENCE [LARGE SCALE GENOMIC DNA]</scope>
    <source>
        <strain>ATCC VR-144 / Wilmington</strain>
    </source>
</reference>
<protein>
    <recommendedName>
        <fullName evidence="1">Holliday junction branch migration complex subunit RuvB</fullName>
        <ecNumber evidence="1">3.6.4.-</ecNumber>
    </recommendedName>
</protein>
<gene>
    <name evidence="1" type="primary">ruvB</name>
    <name type="ordered locus">RT0375</name>
</gene>
<keyword id="KW-0067">ATP-binding</keyword>
<keyword id="KW-0963">Cytoplasm</keyword>
<keyword id="KW-0227">DNA damage</keyword>
<keyword id="KW-0233">DNA recombination</keyword>
<keyword id="KW-0234">DNA repair</keyword>
<keyword id="KW-0238">DNA-binding</keyword>
<keyword id="KW-0378">Hydrolase</keyword>
<keyword id="KW-0547">Nucleotide-binding</keyword>
<comment type="function">
    <text evidence="1">The RuvA-RuvB-RuvC complex processes Holliday junction (HJ) DNA during genetic recombination and DNA repair, while the RuvA-RuvB complex plays an important role in the rescue of blocked DNA replication forks via replication fork reversal (RFR). RuvA specifically binds to HJ cruciform DNA, conferring on it an open structure. The RuvB hexamer acts as an ATP-dependent pump, pulling dsDNA into and through the RuvAB complex. RuvB forms 2 homohexamers on either side of HJ DNA bound by 1 or 2 RuvA tetramers; 4 subunits per hexamer contact DNA at a time. Coordinated motions by a converter formed by DNA-disengaged RuvB subunits stimulates ATP hydrolysis and nucleotide exchange. Immobilization of the converter enables RuvB to convert the ATP-contained energy into a lever motion, pulling 2 nucleotides of DNA out of the RuvA tetramer per ATP hydrolyzed, thus driving DNA branch migration. The RuvB motors rotate together with the DNA substrate, which together with the progressing nucleotide cycle form the mechanistic basis for DNA recombination by continuous HJ branch migration. Branch migration allows RuvC to scan DNA until it finds its consensus sequence, where it cleaves and resolves cruciform DNA.</text>
</comment>
<comment type="catalytic activity">
    <reaction evidence="1">
        <text>ATP + H2O = ADP + phosphate + H(+)</text>
        <dbReference type="Rhea" id="RHEA:13065"/>
        <dbReference type="ChEBI" id="CHEBI:15377"/>
        <dbReference type="ChEBI" id="CHEBI:15378"/>
        <dbReference type="ChEBI" id="CHEBI:30616"/>
        <dbReference type="ChEBI" id="CHEBI:43474"/>
        <dbReference type="ChEBI" id="CHEBI:456216"/>
    </reaction>
</comment>
<comment type="subunit">
    <text evidence="1">Homohexamer. Forms an RuvA(8)-RuvB(12)-Holliday junction (HJ) complex. HJ DNA is sandwiched between 2 RuvA tetramers; dsDNA enters through RuvA and exits via RuvB. An RuvB hexamer assembles on each DNA strand where it exits the tetramer. Each RuvB hexamer is contacted by two RuvA subunits (via domain III) on 2 adjacent RuvB subunits; this complex drives branch migration. In the full resolvosome a probable DNA-RuvA(4)-RuvB(12)-RuvC(2) complex forms which resolves the HJ.</text>
</comment>
<comment type="subcellular location">
    <subcellularLocation>
        <location evidence="1">Cytoplasm</location>
    </subcellularLocation>
</comment>
<comment type="domain">
    <text evidence="1">Has 3 domains, the large (RuvB-L) and small ATPase (RuvB-S) domains and the C-terminal head (RuvB-H) domain. The head domain binds DNA, while the ATPase domains jointly bind ATP, ADP or are empty depending on the state of the subunit in the translocation cycle. During a single DNA translocation step the structure of each domain remains the same, but their relative positions change.</text>
</comment>
<comment type="similarity">
    <text evidence="1">Belongs to the RuvB family.</text>
</comment>
<proteinExistence type="inferred from homology"/>